<dbReference type="EC" id="6.1.1.15" evidence="1"/>
<dbReference type="EMBL" id="CP000942">
    <property type="protein sequence ID" value="ACA32864.1"/>
    <property type="molecule type" value="Genomic_DNA"/>
</dbReference>
<dbReference type="RefSeq" id="WP_006688815.1">
    <property type="nucleotide sequence ID" value="NC_010503.1"/>
</dbReference>
<dbReference type="SMR" id="B1AJ93"/>
<dbReference type="GeneID" id="29672583"/>
<dbReference type="KEGG" id="upa:UPA3_0471"/>
<dbReference type="HOGENOM" id="CLU_001882_4_2_14"/>
<dbReference type="Proteomes" id="UP000002162">
    <property type="component" value="Chromosome"/>
</dbReference>
<dbReference type="GO" id="GO:0017101">
    <property type="term" value="C:aminoacyl-tRNA synthetase multienzyme complex"/>
    <property type="evidence" value="ECO:0007669"/>
    <property type="project" value="TreeGrafter"/>
</dbReference>
<dbReference type="GO" id="GO:0005737">
    <property type="term" value="C:cytoplasm"/>
    <property type="evidence" value="ECO:0007669"/>
    <property type="project" value="UniProtKB-SubCell"/>
</dbReference>
<dbReference type="GO" id="GO:0005524">
    <property type="term" value="F:ATP binding"/>
    <property type="evidence" value="ECO:0007669"/>
    <property type="project" value="UniProtKB-UniRule"/>
</dbReference>
<dbReference type="GO" id="GO:0004827">
    <property type="term" value="F:proline-tRNA ligase activity"/>
    <property type="evidence" value="ECO:0007669"/>
    <property type="project" value="UniProtKB-UniRule"/>
</dbReference>
<dbReference type="GO" id="GO:0006433">
    <property type="term" value="P:prolyl-tRNA aminoacylation"/>
    <property type="evidence" value="ECO:0007669"/>
    <property type="project" value="UniProtKB-UniRule"/>
</dbReference>
<dbReference type="CDD" id="cd00778">
    <property type="entry name" value="ProRS_core_arch_euk"/>
    <property type="match status" value="1"/>
</dbReference>
<dbReference type="FunFam" id="3.30.930.10:FF:000037">
    <property type="entry name" value="Proline--tRNA ligase"/>
    <property type="match status" value="1"/>
</dbReference>
<dbReference type="Gene3D" id="3.40.50.800">
    <property type="entry name" value="Anticodon-binding domain"/>
    <property type="match status" value="1"/>
</dbReference>
<dbReference type="Gene3D" id="3.30.930.10">
    <property type="entry name" value="Bira Bifunctional Protein, Domain 2"/>
    <property type="match status" value="1"/>
</dbReference>
<dbReference type="Gene3D" id="3.30.110.30">
    <property type="entry name" value="C-terminal domain of ProRS"/>
    <property type="match status" value="1"/>
</dbReference>
<dbReference type="HAMAP" id="MF_01571">
    <property type="entry name" value="Pro_tRNA_synth_type3"/>
    <property type="match status" value="1"/>
</dbReference>
<dbReference type="InterPro" id="IPR002314">
    <property type="entry name" value="aa-tRNA-synt_IIb"/>
</dbReference>
<dbReference type="InterPro" id="IPR006195">
    <property type="entry name" value="aa-tRNA-synth_II"/>
</dbReference>
<dbReference type="InterPro" id="IPR045864">
    <property type="entry name" value="aa-tRNA-synth_II/BPL/LPL"/>
</dbReference>
<dbReference type="InterPro" id="IPR004154">
    <property type="entry name" value="Anticodon-bd"/>
</dbReference>
<dbReference type="InterPro" id="IPR036621">
    <property type="entry name" value="Anticodon-bd_dom_sf"/>
</dbReference>
<dbReference type="InterPro" id="IPR002316">
    <property type="entry name" value="Pro-tRNA-ligase_IIa"/>
</dbReference>
<dbReference type="InterPro" id="IPR004499">
    <property type="entry name" value="Pro-tRNA-ligase_IIa_arc-type"/>
</dbReference>
<dbReference type="InterPro" id="IPR016061">
    <property type="entry name" value="Pro-tRNA_ligase_II_C"/>
</dbReference>
<dbReference type="InterPro" id="IPR017449">
    <property type="entry name" value="Pro-tRNA_synth_II"/>
</dbReference>
<dbReference type="InterPro" id="IPR033721">
    <property type="entry name" value="ProRS_core_arch_euk"/>
</dbReference>
<dbReference type="NCBIfam" id="TIGR00408">
    <property type="entry name" value="proS_fam_I"/>
    <property type="match status" value="1"/>
</dbReference>
<dbReference type="PANTHER" id="PTHR43382:SF2">
    <property type="entry name" value="BIFUNCTIONAL GLUTAMATE_PROLINE--TRNA LIGASE"/>
    <property type="match status" value="1"/>
</dbReference>
<dbReference type="PANTHER" id="PTHR43382">
    <property type="entry name" value="PROLYL-TRNA SYNTHETASE"/>
    <property type="match status" value="1"/>
</dbReference>
<dbReference type="Pfam" id="PF03129">
    <property type="entry name" value="HGTP_anticodon"/>
    <property type="match status" value="1"/>
</dbReference>
<dbReference type="Pfam" id="PF09180">
    <property type="entry name" value="ProRS-C_1"/>
    <property type="match status" value="1"/>
</dbReference>
<dbReference type="Pfam" id="PF00587">
    <property type="entry name" value="tRNA-synt_2b"/>
    <property type="match status" value="1"/>
</dbReference>
<dbReference type="PRINTS" id="PR01046">
    <property type="entry name" value="TRNASYNTHPRO"/>
</dbReference>
<dbReference type="SMART" id="SM00946">
    <property type="entry name" value="ProRS-C_1"/>
    <property type="match status" value="1"/>
</dbReference>
<dbReference type="SUPFAM" id="SSF64586">
    <property type="entry name" value="C-terminal domain of ProRS"/>
    <property type="match status" value="1"/>
</dbReference>
<dbReference type="SUPFAM" id="SSF52954">
    <property type="entry name" value="Class II aaRS ABD-related"/>
    <property type="match status" value="1"/>
</dbReference>
<dbReference type="SUPFAM" id="SSF55681">
    <property type="entry name" value="Class II aaRS and biotin synthetases"/>
    <property type="match status" value="1"/>
</dbReference>
<dbReference type="PROSITE" id="PS50862">
    <property type="entry name" value="AA_TRNA_LIGASE_II"/>
    <property type="match status" value="1"/>
</dbReference>
<reference key="1">
    <citation type="submission" date="2008-02" db="EMBL/GenBank/DDBJ databases">
        <title>Genome sequence of Ureaplasma parvum serovar 3.</title>
        <authorList>
            <person name="Methe B.A."/>
            <person name="Glass J."/>
            <person name="Waites K."/>
            <person name="Shrivastava S."/>
        </authorList>
    </citation>
    <scope>NUCLEOTIDE SEQUENCE [LARGE SCALE GENOMIC DNA]</scope>
    <source>
        <strain>ATCC 27815 / 27 / NCTC 11736</strain>
    </source>
</reference>
<sequence>MSKKLEKITTRKENFADWYTSIVNNAKLIQYTDIKGMMVFQPNAWAIWEAIKNQIDVEFKKHGVRNLAMPTLIPLSEFQKEKDHIEGFAPELFMVNQIGDKKLDNSYAIRPTSEILFCNYFKNIVNSYNDLPIKNNQWCSVMRAEKTTRPFLRNAEFHWQELHAIFASENEADSFAKVILDVYTDFVQNYLCIPVIKGLKTPWERFAGAQKTYTIEAMMQDGQALQSATSHYLGQFFAKAYDIKFQGQDNQMHYVHQMSAGLSTRIIGALIMVHADDQGLILPPDIAFNQIAILTIFSNKNPQLLKISQQICEQLNNYRLFEDHSDKGIGYKLAQQEIEGTPICILVGAKELVNQQVVIVRRDTHEKINVDLTDLKLIIPKLLADIKRNIYEKAKKDLEDSIVFVNNIEELKQVIAQNKMAKAFFDGTKEDDEQIKLLTNASTRCIFDETQNGQCFYTNKKTNKLTLFARAY</sequence>
<gene>
    <name evidence="1" type="primary">proS</name>
    <name type="ordered locus">UPA3_0471</name>
</gene>
<organism>
    <name type="scientific">Ureaplasma parvum serovar 3 (strain ATCC 27815 / 27 / NCTC 11736)</name>
    <dbReference type="NCBI Taxonomy" id="505682"/>
    <lineage>
        <taxon>Bacteria</taxon>
        <taxon>Bacillati</taxon>
        <taxon>Mycoplasmatota</taxon>
        <taxon>Mycoplasmoidales</taxon>
        <taxon>Mycoplasmoidaceae</taxon>
        <taxon>Ureaplasma</taxon>
    </lineage>
</organism>
<name>SYP_UREP2</name>
<protein>
    <recommendedName>
        <fullName evidence="1">Proline--tRNA ligase</fullName>
        <ecNumber evidence="1">6.1.1.15</ecNumber>
    </recommendedName>
    <alternativeName>
        <fullName evidence="1">Prolyl-tRNA synthetase</fullName>
        <shortName evidence="1">ProRS</shortName>
    </alternativeName>
</protein>
<comment type="function">
    <text evidence="1">Catalyzes the attachment of proline to tRNA(Pro) in a two-step reaction: proline is first activated by ATP to form Pro-AMP and then transferred to the acceptor end of tRNA(Pro).</text>
</comment>
<comment type="catalytic activity">
    <reaction evidence="1">
        <text>tRNA(Pro) + L-proline + ATP = L-prolyl-tRNA(Pro) + AMP + diphosphate</text>
        <dbReference type="Rhea" id="RHEA:14305"/>
        <dbReference type="Rhea" id="RHEA-COMP:9700"/>
        <dbReference type="Rhea" id="RHEA-COMP:9702"/>
        <dbReference type="ChEBI" id="CHEBI:30616"/>
        <dbReference type="ChEBI" id="CHEBI:33019"/>
        <dbReference type="ChEBI" id="CHEBI:60039"/>
        <dbReference type="ChEBI" id="CHEBI:78442"/>
        <dbReference type="ChEBI" id="CHEBI:78532"/>
        <dbReference type="ChEBI" id="CHEBI:456215"/>
        <dbReference type="EC" id="6.1.1.15"/>
    </reaction>
</comment>
<comment type="subunit">
    <text evidence="1">Homodimer.</text>
</comment>
<comment type="subcellular location">
    <subcellularLocation>
        <location evidence="1">Cytoplasm</location>
    </subcellularLocation>
</comment>
<comment type="domain">
    <text evidence="1">Consists of three domains: the N-terminal catalytic domain, the anticodon-binding domain and the C-terminal extension.</text>
</comment>
<comment type="similarity">
    <text evidence="1">Belongs to the class-II aminoacyl-tRNA synthetase family. ProS type 3 subfamily.</text>
</comment>
<keyword id="KW-0030">Aminoacyl-tRNA synthetase</keyword>
<keyword id="KW-0067">ATP-binding</keyword>
<keyword id="KW-0963">Cytoplasm</keyword>
<keyword id="KW-0436">Ligase</keyword>
<keyword id="KW-0547">Nucleotide-binding</keyword>
<keyword id="KW-0648">Protein biosynthesis</keyword>
<proteinExistence type="inferred from homology"/>
<evidence type="ECO:0000255" key="1">
    <source>
        <dbReference type="HAMAP-Rule" id="MF_01571"/>
    </source>
</evidence>
<accession>B1AJ93</accession>
<feature type="chain" id="PRO_1000215582" description="Proline--tRNA ligase">
    <location>
        <begin position="1"/>
        <end position="472"/>
    </location>
</feature>